<dbReference type="EC" id="2.8.1.8" evidence="1"/>
<dbReference type="EMBL" id="CP001598">
    <property type="protein sequence ID" value="ACQ49418.1"/>
    <property type="molecule type" value="Genomic_DNA"/>
</dbReference>
<dbReference type="RefSeq" id="WP_000166375.1">
    <property type="nucleotide sequence ID" value="NC_012659.1"/>
</dbReference>
<dbReference type="SMR" id="C3PDK2"/>
<dbReference type="GeneID" id="93006112"/>
<dbReference type="KEGG" id="bai:BAA_5241"/>
<dbReference type="HOGENOM" id="CLU_033144_2_1_9"/>
<dbReference type="GO" id="GO:0005737">
    <property type="term" value="C:cytoplasm"/>
    <property type="evidence" value="ECO:0007669"/>
    <property type="project" value="UniProtKB-SubCell"/>
</dbReference>
<dbReference type="GO" id="GO:0051539">
    <property type="term" value="F:4 iron, 4 sulfur cluster binding"/>
    <property type="evidence" value="ECO:0007669"/>
    <property type="project" value="UniProtKB-UniRule"/>
</dbReference>
<dbReference type="GO" id="GO:0016992">
    <property type="term" value="F:lipoate synthase activity"/>
    <property type="evidence" value="ECO:0007669"/>
    <property type="project" value="UniProtKB-UniRule"/>
</dbReference>
<dbReference type="GO" id="GO:0046872">
    <property type="term" value="F:metal ion binding"/>
    <property type="evidence" value="ECO:0007669"/>
    <property type="project" value="UniProtKB-KW"/>
</dbReference>
<dbReference type="CDD" id="cd01335">
    <property type="entry name" value="Radical_SAM"/>
    <property type="match status" value="1"/>
</dbReference>
<dbReference type="FunFam" id="3.20.20.70:FF:000040">
    <property type="entry name" value="Lipoyl synthase"/>
    <property type="match status" value="1"/>
</dbReference>
<dbReference type="Gene3D" id="3.20.20.70">
    <property type="entry name" value="Aldolase class I"/>
    <property type="match status" value="1"/>
</dbReference>
<dbReference type="HAMAP" id="MF_00206">
    <property type="entry name" value="Lipoyl_synth"/>
    <property type="match status" value="1"/>
</dbReference>
<dbReference type="InterPro" id="IPR013785">
    <property type="entry name" value="Aldolase_TIM"/>
</dbReference>
<dbReference type="InterPro" id="IPR006638">
    <property type="entry name" value="Elp3/MiaA/NifB-like_rSAM"/>
</dbReference>
<dbReference type="InterPro" id="IPR031691">
    <property type="entry name" value="LIAS_N"/>
</dbReference>
<dbReference type="InterPro" id="IPR003698">
    <property type="entry name" value="Lipoyl_synth"/>
</dbReference>
<dbReference type="InterPro" id="IPR007197">
    <property type="entry name" value="rSAM"/>
</dbReference>
<dbReference type="NCBIfam" id="TIGR00510">
    <property type="entry name" value="lipA"/>
    <property type="match status" value="1"/>
</dbReference>
<dbReference type="NCBIfam" id="NF004019">
    <property type="entry name" value="PRK05481.1"/>
    <property type="match status" value="1"/>
</dbReference>
<dbReference type="NCBIfam" id="NF009544">
    <property type="entry name" value="PRK12928.1"/>
    <property type="match status" value="1"/>
</dbReference>
<dbReference type="PANTHER" id="PTHR10949">
    <property type="entry name" value="LIPOYL SYNTHASE"/>
    <property type="match status" value="1"/>
</dbReference>
<dbReference type="PANTHER" id="PTHR10949:SF0">
    <property type="entry name" value="LIPOYL SYNTHASE, MITOCHONDRIAL"/>
    <property type="match status" value="1"/>
</dbReference>
<dbReference type="Pfam" id="PF16881">
    <property type="entry name" value="LIAS_N"/>
    <property type="match status" value="1"/>
</dbReference>
<dbReference type="Pfam" id="PF04055">
    <property type="entry name" value="Radical_SAM"/>
    <property type="match status" value="1"/>
</dbReference>
<dbReference type="PIRSF" id="PIRSF005963">
    <property type="entry name" value="Lipoyl_synth"/>
    <property type="match status" value="1"/>
</dbReference>
<dbReference type="SFLD" id="SFLDF00271">
    <property type="entry name" value="lipoyl_synthase"/>
    <property type="match status" value="1"/>
</dbReference>
<dbReference type="SFLD" id="SFLDG01058">
    <property type="entry name" value="lipoyl_synthase_like"/>
    <property type="match status" value="1"/>
</dbReference>
<dbReference type="SMART" id="SM00729">
    <property type="entry name" value="Elp3"/>
    <property type="match status" value="1"/>
</dbReference>
<dbReference type="SUPFAM" id="SSF102114">
    <property type="entry name" value="Radical SAM enzymes"/>
    <property type="match status" value="1"/>
</dbReference>
<dbReference type="PROSITE" id="PS51918">
    <property type="entry name" value="RADICAL_SAM"/>
    <property type="match status" value="1"/>
</dbReference>
<proteinExistence type="inferred from homology"/>
<evidence type="ECO:0000255" key="1">
    <source>
        <dbReference type="HAMAP-Rule" id="MF_00206"/>
    </source>
</evidence>
<evidence type="ECO:0000255" key="2">
    <source>
        <dbReference type="PROSITE-ProRule" id="PRU01266"/>
    </source>
</evidence>
<keyword id="KW-0004">4Fe-4S</keyword>
<keyword id="KW-0963">Cytoplasm</keyword>
<keyword id="KW-0408">Iron</keyword>
<keyword id="KW-0411">Iron-sulfur</keyword>
<keyword id="KW-0479">Metal-binding</keyword>
<keyword id="KW-0949">S-adenosyl-L-methionine</keyword>
<keyword id="KW-0808">Transferase</keyword>
<name>LIPA_BACAA</name>
<feature type="chain" id="PRO_1000124618" description="Lipoyl synthase">
    <location>
        <begin position="1"/>
        <end position="298"/>
    </location>
</feature>
<feature type="domain" description="Radical SAM core" evidence="2">
    <location>
        <begin position="53"/>
        <end position="269"/>
    </location>
</feature>
<feature type="binding site" evidence="1">
    <location>
        <position position="40"/>
    </location>
    <ligand>
        <name>[4Fe-4S] cluster</name>
        <dbReference type="ChEBI" id="CHEBI:49883"/>
        <label>1</label>
    </ligand>
</feature>
<feature type="binding site" evidence="1">
    <location>
        <position position="45"/>
    </location>
    <ligand>
        <name>[4Fe-4S] cluster</name>
        <dbReference type="ChEBI" id="CHEBI:49883"/>
        <label>1</label>
    </ligand>
</feature>
<feature type="binding site" evidence="1">
    <location>
        <position position="51"/>
    </location>
    <ligand>
        <name>[4Fe-4S] cluster</name>
        <dbReference type="ChEBI" id="CHEBI:49883"/>
        <label>1</label>
    </ligand>
</feature>
<feature type="binding site" evidence="1">
    <location>
        <position position="67"/>
    </location>
    <ligand>
        <name>[4Fe-4S] cluster</name>
        <dbReference type="ChEBI" id="CHEBI:49883"/>
        <label>2</label>
        <note>4Fe-4S-S-AdoMet</note>
    </ligand>
</feature>
<feature type="binding site" evidence="1">
    <location>
        <position position="71"/>
    </location>
    <ligand>
        <name>[4Fe-4S] cluster</name>
        <dbReference type="ChEBI" id="CHEBI:49883"/>
        <label>2</label>
        <note>4Fe-4S-S-AdoMet</note>
    </ligand>
</feature>
<feature type="binding site" evidence="1">
    <location>
        <position position="74"/>
    </location>
    <ligand>
        <name>[4Fe-4S] cluster</name>
        <dbReference type="ChEBI" id="CHEBI:49883"/>
        <label>2</label>
        <note>4Fe-4S-S-AdoMet</note>
    </ligand>
</feature>
<feature type="binding site" evidence="1">
    <location>
        <position position="280"/>
    </location>
    <ligand>
        <name>[4Fe-4S] cluster</name>
        <dbReference type="ChEBI" id="CHEBI:49883"/>
        <label>1</label>
    </ligand>
</feature>
<gene>
    <name evidence="1" type="primary">lipA</name>
    <name type="ordered locus">BAA_5241</name>
</gene>
<organism>
    <name type="scientific">Bacillus anthracis (strain A0248)</name>
    <dbReference type="NCBI Taxonomy" id="592021"/>
    <lineage>
        <taxon>Bacteria</taxon>
        <taxon>Bacillati</taxon>
        <taxon>Bacillota</taxon>
        <taxon>Bacilli</taxon>
        <taxon>Bacillales</taxon>
        <taxon>Bacillaceae</taxon>
        <taxon>Bacillus</taxon>
        <taxon>Bacillus cereus group</taxon>
    </lineage>
</organism>
<reference key="1">
    <citation type="submission" date="2009-04" db="EMBL/GenBank/DDBJ databases">
        <title>Genome sequence of Bacillus anthracis A0248.</title>
        <authorList>
            <person name="Dodson R.J."/>
            <person name="Munk A.C."/>
            <person name="Bruce D."/>
            <person name="Detter C."/>
            <person name="Tapia R."/>
            <person name="Sutton G."/>
            <person name="Sims D."/>
            <person name="Brettin T."/>
        </authorList>
    </citation>
    <scope>NUCLEOTIDE SEQUENCE [LARGE SCALE GENOMIC DNA]</scope>
    <source>
        <strain>A0248</strain>
    </source>
</reference>
<comment type="function">
    <text evidence="1">Catalyzes the radical-mediated insertion of two sulfur atoms into the C-6 and C-8 positions of the octanoyl moiety bound to the lipoyl domains of lipoate-dependent enzymes, thereby converting the octanoylated domains into lipoylated derivatives.</text>
</comment>
<comment type="catalytic activity">
    <reaction evidence="1">
        <text>[[Fe-S] cluster scaffold protein carrying a second [4Fe-4S](2+) cluster] + N(6)-octanoyl-L-lysyl-[protein] + 2 oxidized [2Fe-2S]-[ferredoxin] + 2 S-adenosyl-L-methionine + 4 H(+) = [[Fe-S] cluster scaffold protein] + N(6)-[(R)-dihydrolipoyl]-L-lysyl-[protein] + 4 Fe(3+) + 2 hydrogen sulfide + 2 5'-deoxyadenosine + 2 L-methionine + 2 reduced [2Fe-2S]-[ferredoxin]</text>
        <dbReference type="Rhea" id="RHEA:16585"/>
        <dbReference type="Rhea" id="RHEA-COMP:9928"/>
        <dbReference type="Rhea" id="RHEA-COMP:10000"/>
        <dbReference type="Rhea" id="RHEA-COMP:10001"/>
        <dbReference type="Rhea" id="RHEA-COMP:10475"/>
        <dbReference type="Rhea" id="RHEA-COMP:14568"/>
        <dbReference type="Rhea" id="RHEA-COMP:14569"/>
        <dbReference type="ChEBI" id="CHEBI:15378"/>
        <dbReference type="ChEBI" id="CHEBI:17319"/>
        <dbReference type="ChEBI" id="CHEBI:29034"/>
        <dbReference type="ChEBI" id="CHEBI:29919"/>
        <dbReference type="ChEBI" id="CHEBI:33722"/>
        <dbReference type="ChEBI" id="CHEBI:33737"/>
        <dbReference type="ChEBI" id="CHEBI:33738"/>
        <dbReference type="ChEBI" id="CHEBI:57844"/>
        <dbReference type="ChEBI" id="CHEBI:59789"/>
        <dbReference type="ChEBI" id="CHEBI:78809"/>
        <dbReference type="ChEBI" id="CHEBI:83100"/>
        <dbReference type="EC" id="2.8.1.8"/>
    </reaction>
</comment>
<comment type="cofactor">
    <cofactor evidence="1">
        <name>[4Fe-4S] cluster</name>
        <dbReference type="ChEBI" id="CHEBI:49883"/>
    </cofactor>
    <text evidence="1">Binds 2 [4Fe-4S] clusters per subunit. One cluster is coordinated with 3 cysteines and an exchangeable S-adenosyl-L-methionine.</text>
</comment>
<comment type="pathway">
    <text evidence="1">Protein modification; protein lipoylation via endogenous pathway; protein N(6)-(lipoyl)lysine from octanoyl-[acyl-carrier-protein].</text>
</comment>
<comment type="subcellular location">
    <subcellularLocation>
        <location evidence="1">Cytoplasm</location>
    </subcellularLocation>
</comment>
<comment type="similarity">
    <text evidence="1">Belongs to the radical SAM superfamily. Lipoyl synthase family.</text>
</comment>
<protein>
    <recommendedName>
        <fullName evidence="1">Lipoyl synthase</fullName>
        <ecNumber evidence="1">2.8.1.8</ecNumber>
    </recommendedName>
    <alternativeName>
        <fullName evidence="1">Lip-syn</fullName>
        <shortName evidence="1">LS</shortName>
    </alternativeName>
    <alternativeName>
        <fullName evidence="1">Lipoate synthase</fullName>
    </alternativeName>
    <alternativeName>
        <fullName evidence="1">Lipoic acid synthase</fullName>
    </alternativeName>
    <alternativeName>
        <fullName evidence="1">Sulfur insertion protein LipA</fullName>
    </alternativeName>
</protein>
<accession>C3PDK2</accession>
<sequence>MTKQTEYKRKPEWLKIKLNTNENYTGLKKMMRSKNLHTVCEEAKCPNIHECWAVRKTATFMILGAVCTRACRFCAVKTGLPTELDLQEPERVADSVVQMGLKHVVITAVARDDLKDGGAAVFAETVRAVRRKNPFTSIEVLPSDMGGVEENLKMLMDAKPDILNHNIETVRRLSNRVRARAKYDRSLEFLRRAKEMQPDIPTKSSIMVGLGETREDLIEAMDDLRANNVDILTLGQYLQPSKKHLPVLKYYPPAEFAELKEIALSKGFSHCEAGPLVRSSYHADEQVRSAKEKTAEAK</sequence>